<evidence type="ECO:0000255" key="1">
    <source>
        <dbReference type="HAMAP-Rule" id="MF_00502"/>
    </source>
</evidence>
<evidence type="ECO:0000305" key="2"/>
<dbReference type="EMBL" id="CP000886">
    <property type="protein sequence ID" value="ABX68467.1"/>
    <property type="molecule type" value="Genomic_DNA"/>
</dbReference>
<dbReference type="RefSeq" id="WP_000801415.1">
    <property type="nucleotide sequence ID" value="NC_010102.1"/>
</dbReference>
<dbReference type="SMR" id="A9MWA8"/>
<dbReference type="KEGG" id="spq:SPAB_03105"/>
<dbReference type="PATRIC" id="fig|1016998.12.peg.2930"/>
<dbReference type="HOGENOM" id="CLU_114306_2_1_6"/>
<dbReference type="BioCyc" id="SENT1016998:SPAB_RS12675-MONOMER"/>
<dbReference type="Proteomes" id="UP000008556">
    <property type="component" value="Chromosome"/>
</dbReference>
<dbReference type="GO" id="GO:1990904">
    <property type="term" value="C:ribonucleoprotein complex"/>
    <property type="evidence" value="ECO:0007669"/>
    <property type="project" value="UniProtKB-KW"/>
</dbReference>
<dbReference type="GO" id="GO:0005840">
    <property type="term" value="C:ribosome"/>
    <property type="evidence" value="ECO:0007669"/>
    <property type="project" value="UniProtKB-KW"/>
</dbReference>
<dbReference type="GO" id="GO:0003735">
    <property type="term" value="F:structural constituent of ribosome"/>
    <property type="evidence" value="ECO:0007669"/>
    <property type="project" value="InterPro"/>
</dbReference>
<dbReference type="GO" id="GO:0006412">
    <property type="term" value="P:translation"/>
    <property type="evidence" value="ECO:0007669"/>
    <property type="project" value="UniProtKB-UniRule"/>
</dbReference>
<dbReference type="Gene3D" id="4.10.830.30">
    <property type="entry name" value="Ribosomal protein L31"/>
    <property type="match status" value="1"/>
</dbReference>
<dbReference type="HAMAP" id="MF_00502">
    <property type="entry name" value="Ribosomal_bL31_2"/>
    <property type="match status" value="1"/>
</dbReference>
<dbReference type="InterPro" id="IPR034704">
    <property type="entry name" value="Ribosomal_bL28/bL31-like_sf"/>
</dbReference>
<dbReference type="InterPro" id="IPR002150">
    <property type="entry name" value="Ribosomal_bL31"/>
</dbReference>
<dbReference type="InterPro" id="IPR027493">
    <property type="entry name" value="Ribosomal_bL31_B"/>
</dbReference>
<dbReference type="InterPro" id="IPR042105">
    <property type="entry name" value="Ribosomal_bL31_sf"/>
</dbReference>
<dbReference type="NCBIfam" id="TIGR00105">
    <property type="entry name" value="L31"/>
    <property type="match status" value="1"/>
</dbReference>
<dbReference type="NCBIfam" id="NF002462">
    <property type="entry name" value="PRK01678.1"/>
    <property type="match status" value="1"/>
</dbReference>
<dbReference type="PANTHER" id="PTHR33280">
    <property type="entry name" value="50S RIBOSOMAL PROTEIN L31, CHLOROPLASTIC"/>
    <property type="match status" value="1"/>
</dbReference>
<dbReference type="PANTHER" id="PTHR33280:SF1">
    <property type="entry name" value="LARGE RIBOSOMAL SUBUNIT PROTEIN BL31C"/>
    <property type="match status" value="1"/>
</dbReference>
<dbReference type="Pfam" id="PF01197">
    <property type="entry name" value="Ribosomal_L31"/>
    <property type="match status" value="1"/>
</dbReference>
<dbReference type="PRINTS" id="PR01249">
    <property type="entry name" value="RIBOSOMALL31"/>
</dbReference>
<dbReference type="SUPFAM" id="SSF143800">
    <property type="entry name" value="L28p-like"/>
    <property type="match status" value="1"/>
</dbReference>
<proteinExistence type="inferred from homology"/>
<sequence>MKPDIHPVYRTVVFHDTSANEYVKVGSTIKTEREIELDGVTYPYVTIDVSSKSHPFYTGRQKTFDSESSAARFQKRFGHFIGAKRG</sequence>
<comment type="subunit">
    <text evidence="1">Part of the 50S ribosomal subunit.</text>
</comment>
<comment type="similarity">
    <text evidence="1">Belongs to the bacterial ribosomal protein bL31 family. Type B subfamily.</text>
</comment>
<reference key="1">
    <citation type="submission" date="2007-11" db="EMBL/GenBank/DDBJ databases">
        <authorList>
            <consortium name="The Salmonella enterica serovar Paratyphi B Genome Sequencing Project"/>
            <person name="McClelland M."/>
            <person name="Sanderson E.K."/>
            <person name="Porwollik S."/>
            <person name="Spieth J."/>
            <person name="Clifton W.S."/>
            <person name="Fulton R."/>
            <person name="Cordes M."/>
            <person name="Wollam A."/>
            <person name="Shah N."/>
            <person name="Pepin K."/>
            <person name="Bhonagiri V."/>
            <person name="Nash W."/>
            <person name="Johnson M."/>
            <person name="Thiruvilangam P."/>
            <person name="Wilson R."/>
        </authorList>
    </citation>
    <scope>NUCLEOTIDE SEQUENCE [LARGE SCALE GENOMIC DNA]</scope>
    <source>
        <strain>ATCC BAA-1250 / SPB7</strain>
    </source>
</reference>
<accession>A9MWA8</accession>
<name>RL31B_SALPB</name>
<gene>
    <name evidence="1" type="primary">rpmE2</name>
    <name type="ordered locus">SPAB_03105</name>
</gene>
<protein>
    <recommendedName>
        <fullName evidence="1">Large ribosomal subunit protein bL31B</fullName>
    </recommendedName>
    <alternativeName>
        <fullName evidence="2">50S ribosomal protein L31 type B</fullName>
    </alternativeName>
</protein>
<organism>
    <name type="scientific">Salmonella paratyphi B (strain ATCC BAA-1250 / SPB7)</name>
    <dbReference type="NCBI Taxonomy" id="1016998"/>
    <lineage>
        <taxon>Bacteria</taxon>
        <taxon>Pseudomonadati</taxon>
        <taxon>Pseudomonadota</taxon>
        <taxon>Gammaproteobacteria</taxon>
        <taxon>Enterobacterales</taxon>
        <taxon>Enterobacteriaceae</taxon>
        <taxon>Salmonella</taxon>
    </lineage>
</organism>
<keyword id="KW-0687">Ribonucleoprotein</keyword>
<keyword id="KW-0689">Ribosomal protein</keyword>
<feature type="chain" id="PRO_1000081458" description="Large ribosomal subunit protein bL31B">
    <location>
        <begin position="1"/>
        <end position="86"/>
    </location>
</feature>